<keyword id="KW-0997">Cell inner membrane</keyword>
<keyword id="KW-1003">Cell membrane</keyword>
<keyword id="KW-0407">Ion channel</keyword>
<keyword id="KW-0406">Ion transport</keyword>
<keyword id="KW-0472">Membrane</keyword>
<keyword id="KW-0479">Metal-binding</keyword>
<keyword id="KW-1185">Reference proteome</keyword>
<keyword id="KW-0915">Sodium</keyword>
<keyword id="KW-0812">Transmembrane</keyword>
<keyword id="KW-1133">Transmembrane helix</keyword>
<keyword id="KW-0813">Transport</keyword>
<gene>
    <name evidence="1" type="primary">fluC</name>
    <name evidence="1" type="synonym">crcB</name>
    <name type="ordered locus">Rfer_1559</name>
</gene>
<proteinExistence type="inferred from homology"/>
<sequence>MRLMISVLAICIGASLGALARWRLGLWLNPGAVLPLGTLAANLIGGYLIGICVAVFQALPNLDPVWRLALITGFLGGLTTFSSFSAEVVGMLGQQRYALGFGTAGLHLFGSLLLTLAGIKTATFLIAFNT</sequence>
<accession>Q21Y62</accession>
<dbReference type="EMBL" id="CP000267">
    <property type="protein sequence ID" value="ABD69291.1"/>
    <property type="status" value="ALT_INIT"/>
    <property type="molecule type" value="Genomic_DNA"/>
</dbReference>
<dbReference type="SMR" id="Q21Y62"/>
<dbReference type="STRING" id="338969.Rfer_1559"/>
<dbReference type="KEGG" id="rfr:Rfer_1559"/>
<dbReference type="eggNOG" id="COG0239">
    <property type="taxonomic scope" value="Bacteria"/>
</dbReference>
<dbReference type="HOGENOM" id="CLU_114342_3_3_4"/>
<dbReference type="Proteomes" id="UP000008332">
    <property type="component" value="Chromosome"/>
</dbReference>
<dbReference type="GO" id="GO:0005886">
    <property type="term" value="C:plasma membrane"/>
    <property type="evidence" value="ECO:0007669"/>
    <property type="project" value="UniProtKB-SubCell"/>
</dbReference>
<dbReference type="GO" id="GO:0062054">
    <property type="term" value="F:fluoride channel activity"/>
    <property type="evidence" value="ECO:0007669"/>
    <property type="project" value="UniProtKB-UniRule"/>
</dbReference>
<dbReference type="GO" id="GO:0046872">
    <property type="term" value="F:metal ion binding"/>
    <property type="evidence" value="ECO:0007669"/>
    <property type="project" value="UniProtKB-KW"/>
</dbReference>
<dbReference type="GO" id="GO:0140114">
    <property type="term" value="P:cellular detoxification of fluoride"/>
    <property type="evidence" value="ECO:0007669"/>
    <property type="project" value="UniProtKB-UniRule"/>
</dbReference>
<dbReference type="HAMAP" id="MF_00454">
    <property type="entry name" value="FluC"/>
    <property type="match status" value="1"/>
</dbReference>
<dbReference type="InterPro" id="IPR003691">
    <property type="entry name" value="FluC"/>
</dbReference>
<dbReference type="NCBIfam" id="TIGR00494">
    <property type="entry name" value="crcB"/>
    <property type="match status" value="1"/>
</dbReference>
<dbReference type="NCBIfam" id="NF010792">
    <property type="entry name" value="PRK14196.1"/>
    <property type="match status" value="1"/>
</dbReference>
<dbReference type="PANTHER" id="PTHR28259">
    <property type="entry name" value="FLUORIDE EXPORT PROTEIN 1-RELATED"/>
    <property type="match status" value="1"/>
</dbReference>
<dbReference type="PANTHER" id="PTHR28259:SF1">
    <property type="entry name" value="FLUORIDE EXPORT PROTEIN 1-RELATED"/>
    <property type="match status" value="1"/>
</dbReference>
<dbReference type="Pfam" id="PF02537">
    <property type="entry name" value="CRCB"/>
    <property type="match status" value="1"/>
</dbReference>
<evidence type="ECO:0000255" key="1">
    <source>
        <dbReference type="HAMAP-Rule" id="MF_00454"/>
    </source>
</evidence>
<evidence type="ECO:0000305" key="2"/>
<feature type="chain" id="PRO_0000252927" description="Fluoride-specific ion channel FluC">
    <location>
        <begin position="1"/>
        <end position="130"/>
    </location>
</feature>
<feature type="transmembrane region" description="Helical" evidence="1">
    <location>
        <begin position="7"/>
        <end position="27"/>
    </location>
</feature>
<feature type="transmembrane region" description="Helical" evidence="1">
    <location>
        <begin position="36"/>
        <end position="56"/>
    </location>
</feature>
<feature type="transmembrane region" description="Helical" evidence="1">
    <location>
        <begin position="69"/>
        <end position="89"/>
    </location>
</feature>
<feature type="transmembrane region" description="Helical" evidence="1">
    <location>
        <begin position="99"/>
        <end position="119"/>
    </location>
</feature>
<feature type="binding site" evidence="1">
    <location>
        <position position="76"/>
    </location>
    <ligand>
        <name>Na(+)</name>
        <dbReference type="ChEBI" id="CHEBI:29101"/>
        <note>structural</note>
    </ligand>
</feature>
<feature type="binding site" evidence="1">
    <location>
        <position position="79"/>
    </location>
    <ligand>
        <name>Na(+)</name>
        <dbReference type="ChEBI" id="CHEBI:29101"/>
        <note>structural</note>
    </ligand>
</feature>
<comment type="function">
    <text evidence="1">Fluoride-specific ion channel. Important for reducing fluoride concentration in the cell, thus reducing its toxicity.</text>
</comment>
<comment type="catalytic activity">
    <reaction evidence="1">
        <text>fluoride(in) = fluoride(out)</text>
        <dbReference type="Rhea" id="RHEA:76159"/>
        <dbReference type="ChEBI" id="CHEBI:17051"/>
    </reaction>
    <physiologicalReaction direction="left-to-right" evidence="1">
        <dbReference type="Rhea" id="RHEA:76160"/>
    </physiologicalReaction>
</comment>
<comment type="activity regulation">
    <text evidence="1">Na(+) is not transported, but it plays an essential structural role and its presence is essential for fluoride channel function.</text>
</comment>
<comment type="subcellular location">
    <subcellularLocation>
        <location evidence="1">Cell inner membrane</location>
        <topology evidence="1">Multi-pass membrane protein</topology>
    </subcellularLocation>
</comment>
<comment type="similarity">
    <text evidence="1">Belongs to the fluoride channel Fluc/FEX (TC 1.A.43) family.</text>
</comment>
<comment type="sequence caution" evidence="2">
    <conflict type="erroneous initiation">
        <sequence resource="EMBL-CDS" id="ABD69291"/>
    </conflict>
</comment>
<organism>
    <name type="scientific">Albidiferax ferrireducens (strain ATCC BAA-621 / DSM 15236 / T118)</name>
    <name type="common">Rhodoferax ferrireducens</name>
    <dbReference type="NCBI Taxonomy" id="338969"/>
    <lineage>
        <taxon>Bacteria</taxon>
        <taxon>Pseudomonadati</taxon>
        <taxon>Pseudomonadota</taxon>
        <taxon>Betaproteobacteria</taxon>
        <taxon>Burkholderiales</taxon>
        <taxon>Comamonadaceae</taxon>
        <taxon>Rhodoferax</taxon>
    </lineage>
</organism>
<reference key="1">
    <citation type="submission" date="2006-02" db="EMBL/GenBank/DDBJ databases">
        <title>Complete sequence of chromosome of Rhodoferax ferrireducens DSM 15236.</title>
        <authorList>
            <person name="Copeland A."/>
            <person name="Lucas S."/>
            <person name="Lapidus A."/>
            <person name="Barry K."/>
            <person name="Detter J.C."/>
            <person name="Glavina del Rio T."/>
            <person name="Hammon N."/>
            <person name="Israni S."/>
            <person name="Pitluck S."/>
            <person name="Brettin T."/>
            <person name="Bruce D."/>
            <person name="Han C."/>
            <person name="Tapia R."/>
            <person name="Gilna P."/>
            <person name="Kiss H."/>
            <person name="Schmutz J."/>
            <person name="Larimer F."/>
            <person name="Land M."/>
            <person name="Kyrpides N."/>
            <person name="Ivanova N."/>
            <person name="Richardson P."/>
        </authorList>
    </citation>
    <scope>NUCLEOTIDE SEQUENCE [LARGE SCALE GENOMIC DNA]</scope>
    <source>
        <strain>ATCC BAA-621 / DSM 15236 / T118</strain>
    </source>
</reference>
<protein>
    <recommendedName>
        <fullName evidence="1">Fluoride-specific ion channel FluC</fullName>
    </recommendedName>
</protein>
<name>FLUC_ALBFT</name>